<gene>
    <name type="primary">arg82</name>
    <name type="ORF">SPAC607.04</name>
</gene>
<keyword id="KW-0067">ATP-binding</keyword>
<keyword id="KW-0963">Cytoplasm</keyword>
<keyword id="KW-0418">Kinase</keyword>
<keyword id="KW-0547">Nucleotide-binding</keyword>
<keyword id="KW-0539">Nucleus</keyword>
<keyword id="KW-1185">Reference proteome</keyword>
<keyword id="KW-0804">Transcription</keyword>
<keyword id="KW-0805">Transcription regulation</keyword>
<keyword id="KW-0808">Transferase</keyword>
<organism>
    <name type="scientific">Schizosaccharomyces pombe (strain 972 / ATCC 24843)</name>
    <name type="common">Fission yeast</name>
    <dbReference type="NCBI Taxonomy" id="284812"/>
    <lineage>
        <taxon>Eukaryota</taxon>
        <taxon>Fungi</taxon>
        <taxon>Dikarya</taxon>
        <taxon>Ascomycota</taxon>
        <taxon>Taphrinomycotina</taxon>
        <taxon>Schizosaccharomycetes</taxon>
        <taxon>Schizosaccharomycetales</taxon>
        <taxon>Schizosaccharomycetaceae</taxon>
        <taxon>Schizosaccharomyces</taxon>
    </lineage>
</organism>
<feature type="chain" id="PRO_0000318137" description="Inositol polyphosphate multikinase">
    <location>
        <begin position="1"/>
        <end position="268"/>
    </location>
</feature>
<feature type="binding site" evidence="2">
    <location>
        <position position="27"/>
    </location>
    <ligand>
        <name>ATP</name>
        <dbReference type="ChEBI" id="CHEBI:30616"/>
    </ligand>
</feature>
<feature type="binding site" evidence="2">
    <location>
        <begin position="86"/>
        <end position="88"/>
    </location>
    <ligand>
        <name>ATP</name>
        <dbReference type="ChEBI" id="CHEBI:30616"/>
    </ligand>
</feature>
<feature type="binding site" evidence="2">
    <location>
        <position position="99"/>
    </location>
    <ligand>
        <name>ATP</name>
        <dbReference type="ChEBI" id="CHEBI:30616"/>
    </ligand>
</feature>
<feature type="binding site" evidence="1">
    <location>
        <begin position="127"/>
        <end position="135"/>
    </location>
    <ligand>
        <name>substrate</name>
    </ligand>
</feature>
<feature type="binding site" evidence="2">
    <location>
        <position position="235"/>
    </location>
    <ligand>
        <name>ATP</name>
        <dbReference type="ChEBI" id="CHEBI:30616"/>
    </ligand>
</feature>
<evidence type="ECO:0000250" key="1"/>
<evidence type="ECO:0000250" key="2">
    <source>
        <dbReference type="UniProtKB" id="P07250"/>
    </source>
</evidence>
<evidence type="ECO:0000255" key="3"/>
<evidence type="ECO:0000269" key="4">
    <source>
    </source>
</evidence>
<evidence type="ECO:0000269" key="5">
    <source>
    </source>
</evidence>
<evidence type="ECO:0000305" key="6"/>
<evidence type="ECO:0000305" key="7">
    <source>
    </source>
</evidence>
<evidence type="ECO:0000312" key="8">
    <source>
        <dbReference type="EMBL" id="CAB63791.1"/>
    </source>
</evidence>
<sequence>MKLKLFPFQAAGHGQVLVSEDDKILIKPCIKSEVDFYKTCNDNITLYNWIPKNFGEWMPSSRDIEGINPIAESVAFSLTGKAIILENILYQMETPCVMDIKLGKQLWADDAPLEKRKRLDAVSRSTTSGSLGFRITGILSWDRTNNTYIKRSTAWGKTLTDSDVVEGLNDFFVSCSLSQKARLVESFLNLLKLFEVDLSESYIELKSSSILFVYDYSSLNPTYHCESNVVLKLIDLAHSRWTKNTIDHNTLIGVKNLIHCFAMLLKNE</sequence>
<name>IPMK_SCHPO</name>
<proteinExistence type="evidence at protein level"/>
<accession>Q9US14</accession>
<protein>
    <recommendedName>
        <fullName evidence="6">Inositol polyphosphate multikinase</fullName>
        <shortName>IPMK</shortName>
        <ecNumber evidence="2">2.7.1.127</ecNumber>
        <ecNumber evidence="2">2.7.1.151</ecNumber>
    </recommendedName>
    <alternativeName>
        <fullName>Inositol polyphosphate kinase 2</fullName>
    </alternativeName>
</protein>
<reference evidence="8" key="1">
    <citation type="journal article" date="2002" name="Nature">
        <title>The genome sequence of Schizosaccharomyces pombe.</title>
        <authorList>
            <person name="Wood V."/>
            <person name="Gwilliam R."/>
            <person name="Rajandream M.A."/>
            <person name="Lyne M.H."/>
            <person name="Lyne R."/>
            <person name="Stewart A."/>
            <person name="Sgouros J.G."/>
            <person name="Peat N."/>
            <person name="Hayles J."/>
            <person name="Baker S.G."/>
            <person name="Basham D."/>
            <person name="Bowman S."/>
            <person name="Brooks K."/>
            <person name="Brown D."/>
            <person name="Brown S."/>
            <person name="Chillingworth T."/>
            <person name="Churcher C.M."/>
            <person name="Collins M."/>
            <person name="Connor R."/>
            <person name="Cronin A."/>
            <person name="Davis P."/>
            <person name="Feltwell T."/>
            <person name="Fraser A."/>
            <person name="Gentles S."/>
            <person name="Goble A."/>
            <person name="Hamlin N."/>
            <person name="Harris D.E."/>
            <person name="Hidalgo J."/>
            <person name="Hodgson G."/>
            <person name="Holroyd S."/>
            <person name="Hornsby T."/>
            <person name="Howarth S."/>
            <person name="Huckle E.J."/>
            <person name="Hunt S."/>
            <person name="Jagels K."/>
            <person name="James K.D."/>
            <person name="Jones L."/>
            <person name="Jones M."/>
            <person name="Leather S."/>
            <person name="McDonald S."/>
            <person name="McLean J."/>
            <person name="Mooney P."/>
            <person name="Moule S."/>
            <person name="Mungall K.L."/>
            <person name="Murphy L.D."/>
            <person name="Niblett D."/>
            <person name="Odell C."/>
            <person name="Oliver K."/>
            <person name="O'Neil S."/>
            <person name="Pearson D."/>
            <person name="Quail M.A."/>
            <person name="Rabbinowitsch E."/>
            <person name="Rutherford K.M."/>
            <person name="Rutter S."/>
            <person name="Saunders D."/>
            <person name="Seeger K."/>
            <person name="Sharp S."/>
            <person name="Skelton J."/>
            <person name="Simmonds M.N."/>
            <person name="Squares R."/>
            <person name="Squares S."/>
            <person name="Stevens K."/>
            <person name="Taylor K."/>
            <person name="Taylor R.G."/>
            <person name="Tivey A."/>
            <person name="Walsh S.V."/>
            <person name="Warren T."/>
            <person name="Whitehead S."/>
            <person name="Woodward J.R."/>
            <person name="Volckaert G."/>
            <person name="Aert R."/>
            <person name="Robben J."/>
            <person name="Grymonprez B."/>
            <person name="Weltjens I."/>
            <person name="Vanstreels E."/>
            <person name="Rieger M."/>
            <person name="Schaefer M."/>
            <person name="Mueller-Auer S."/>
            <person name="Gabel C."/>
            <person name="Fuchs M."/>
            <person name="Duesterhoeft A."/>
            <person name="Fritzc C."/>
            <person name="Holzer E."/>
            <person name="Moestl D."/>
            <person name="Hilbert H."/>
            <person name="Borzym K."/>
            <person name="Langer I."/>
            <person name="Beck A."/>
            <person name="Lehrach H."/>
            <person name="Reinhardt R."/>
            <person name="Pohl T.M."/>
            <person name="Eger P."/>
            <person name="Zimmermann W."/>
            <person name="Wedler H."/>
            <person name="Wambutt R."/>
            <person name="Purnelle B."/>
            <person name="Goffeau A."/>
            <person name="Cadieu E."/>
            <person name="Dreano S."/>
            <person name="Gloux S."/>
            <person name="Lelaure V."/>
            <person name="Mottier S."/>
            <person name="Galibert F."/>
            <person name="Aves S.J."/>
            <person name="Xiang Z."/>
            <person name="Hunt C."/>
            <person name="Moore K."/>
            <person name="Hurst S.M."/>
            <person name="Lucas M."/>
            <person name="Rochet M."/>
            <person name="Gaillardin C."/>
            <person name="Tallada V.A."/>
            <person name="Garzon A."/>
            <person name="Thode G."/>
            <person name="Daga R.R."/>
            <person name="Cruzado L."/>
            <person name="Jimenez J."/>
            <person name="Sanchez M."/>
            <person name="del Rey F."/>
            <person name="Benito J."/>
            <person name="Dominguez A."/>
            <person name="Revuelta J.L."/>
            <person name="Moreno S."/>
            <person name="Armstrong J."/>
            <person name="Forsburg S.L."/>
            <person name="Cerutti L."/>
            <person name="Lowe T."/>
            <person name="McCombie W.R."/>
            <person name="Paulsen I."/>
            <person name="Potashkin J."/>
            <person name="Shpakovski G.V."/>
            <person name="Ussery D."/>
            <person name="Barrell B.G."/>
            <person name="Nurse P."/>
        </authorList>
    </citation>
    <scope>NUCLEOTIDE SEQUENCE [LARGE SCALE GENOMIC DNA]</scope>
    <source>
        <strain>972 / ATCC 24843</strain>
    </source>
</reference>
<reference key="2">
    <citation type="journal article" date="1998" name="Biochem. J.">
        <title>Inositol hexakisphosphate in Schizosaccharomyces pombe: synthesis from Ins(1,4,5)P3 and osmotic regulation.</title>
        <authorList>
            <person name="Ongusaha P.P."/>
            <person name="Hughes P.J."/>
            <person name="Davey J."/>
            <person name="Michell R.H."/>
        </authorList>
    </citation>
    <scope>FUNCTION</scope>
    <scope>CATALYTIC ACTIVITY</scope>
</reference>
<reference key="3">
    <citation type="journal article" date="2003" name="Mol. Microbiol.">
        <title>Arg82p is a bifunctional protein whose inositol polyphosphate kinase activity is essential for nitrogen and PHO gene expression but not for Mcm1p chaperoning in yeast.</title>
        <authorList>
            <person name="El Alami M."/>
            <person name="Messenguy F."/>
            <person name="Scherens B."/>
            <person name="Dubois E."/>
        </authorList>
    </citation>
    <scope>FUNCTION</scope>
</reference>
<reference evidence="6" key="4">
    <citation type="journal article" date="2006" name="Nat. Biotechnol.">
        <title>ORFeome cloning and global analysis of protein localization in the fission yeast Schizosaccharomyces pombe.</title>
        <authorList>
            <person name="Matsuyama A."/>
            <person name="Arai R."/>
            <person name="Yashiroda Y."/>
            <person name="Shirai A."/>
            <person name="Kamata A."/>
            <person name="Sekido S."/>
            <person name="Kobayashi Y."/>
            <person name="Hashimoto A."/>
            <person name="Hamamoto M."/>
            <person name="Hiraoka Y."/>
            <person name="Horinouchi S."/>
            <person name="Yoshida M."/>
        </authorList>
    </citation>
    <scope>SUBCELLULAR LOCATION [LARGE SCALE ANALYSIS]</scope>
</reference>
<comment type="function">
    <text evidence="2 4 7">Inositol phosphate kinase with both monophosphoinositol and diphosphoinositol polyphosphate synthase activities. Able to phosphorylate inositol 1,4,5-trisphosphate (Ins(1,4,5)P3) on both the carbon-3 and carbon-6 positions to synthesize inositol 1,3,4,5-tetrakisphosphate (Ins(1,3,4,5)P4) and inositol 1,4,5,6-tetrakisphosphate (Ins(1,4,5,6)P4), and then to subsequently phosphorylate and convert either isomer of InsP4 to inositol 1,3,4,5,6-pentakisphosphate (Ins(1,3,4,5,6)P5). Also converts (Ins(1,3,4,5,6)P5) to InsP6 (Probable). Also has a role in transcription regulation. The catalytic activity is required for PHO gene repression by phosphate and for NCR gene activation in response to nitrogen availability, indicating a role for inositol pyrophosphates in these controls (PubMed:12828642). Inositol polyphosphates may be involved in the regulation of chromatin remodeling of transcription (By similarity).</text>
</comment>
<comment type="catalytic activity">
    <reaction evidence="7">
        <text>1D-myo-inositol 1,4,5-trisphosphate + 2 ATP = 1D-myo-inositol 1,3,4,5,6-pentakisphosphate + 2 ADP + 2 H(+)</text>
        <dbReference type="Rhea" id="RHEA:32359"/>
        <dbReference type="ChEBI" id="CHEBI:15378"/>
        <dbReference type="ChEBI" id="CHEBI:30616"/>
        <dbReference type="ChEBI" id="CHEBI:57733"/>
        <dbReference type="ChEBI" id="CHEBI:203600"/>
        <dbReference type="ChEBI" id="CHEBI:456216"/>
        <dbReference type="EC" id="2.7.1.151"/>
    </reaction>
</comment>
<comment type="catalytic activity">
    <reaction evidence="7">
        <text>1D-myo-inositol 1,4,5-trisphosphate + ATP = 1D-myo-inositol 1,4,5,6-tetrakisphosphate + ADP + H(+)</text>
        <dbReference type="Rhea" id="RHEA:17717"/>
        <dbReference type="ChEBI" id="CHEBI:15378"/>
        <dbReference type="ChEBI" id="CHEBI:30616"/>
        <dbReference type="ChEBI" id="CHEBI:57627"/>
        <dbReference type="ChEBI" id="CHEBI:203600"/>
        <dbReference type="ChEBI" id="CHEBI:456216"/>
    </reaction>
    <physiologicalReaction direction="left-to-right" evidence="7">
        <dbReference type="Rhea" id="RHEA:17718"/>
    </physiologicalReaction>
</comment>
<comment type="catalytic activity">
    <reaction evidence="7">
        <text>1D-myo-inositol 1,4,5-trisphosphate + ATP = 1D-myo-inositol 1,3,4,5-tetrakisphosphate + ADP + H(+)</text>
        <dbReference type="Rhea" id="RHEA:11020"/>
        <dbReference type="ChEBI" id="CHEBI:15378"/>
        <dbReference type="ChEBI" id="CHEBI:30616"/>
        <dbReference type="ChEBI" id="CHEBI:57895"/>
        <dbReference type="ChEBI" id="CHEBI:203600"/>
        <dbReference type="ChEBI" id="CHEBI:456216"/>
        <dbReference type="EC" id="2.7.1.127"/>
    </reaction>
    <physiologicalReaction direction="left-to-right" evidence="7">
        <dbReference type="Rhea" id="RHEA:11021"/>
    </physiologicalReaction>
</comment>
<comment type="catalytic activity">
    <reaction evidence="7">
        <text>1D-myo-inositol 1,4,5,6-tetrakisphosphate + ATP = 1D-myo-inositol 1,3,4,5,6-pentakisphosphate + ADP + H(+)</text>
        <dbReference type="Rhea" id="RHEA:11856"/>
        <dbReference type="ChEBI" id="CHEBI:15378"/>
        <dbReference type="ChEBI" id="CHEBI:30616"/>
        <dbReference type="ChEBI" id="CHEBI:57627"/>
        <dbReference type="ChEBI" id="CHEBI:57733"/>
        <dbReference type="ChEBI" id="CHEBI:456216"/>
    </reaction>
    <physiologicalReaction direction="left-to-right" evidence="7">
        <dbReference type="Rhea" id="RHEA:11857"/>
    </physiologicalReaction>
</comment>
<comment type="subcellular location">
    <subcellularLocation>
        <location evidence="5">Cytoplasm</location>
    </subcellularLocation>
    <subcellularLocation>
        <location evidence="5">Nucleus</location>
    </subcellularLocation>
</comment>
<comment type="similarity">
    <text evidence="3">Belongs to the inositol phosphokinase (IPK) family.</text>
</comment>
<dbReference type="EC" id="2.7.1.127" evidence="2"/>
<dbReference type="EC" id="2.7.1.151" evidence="2"/>
<dbReference type="EMBL" id="CU329670">
    <property type="protein sequence ID" value="CAB63791.1"/>
    <property type="molecule type" value="Genomic_DNA"/>
</dbReference>
<dbReference type="PIR" id="T50224">
    <property type="entry name" value="T50224"/>
</dbReference>
<dbReference type="RefSeq" id="NP_593593.1">
    <property type="nucleotide sequence ID" value="NM_001019024.2"/>
</dbReference>
<dbReference type="SMR" id="Q9US14"/>
<dbReference type="FunCoup" id="Q9US14">
    <property type="interactions" value="389"/>
</dbReference>
<dbReference type="STRING" id="284812.Q9US14"/>
<dbReference type="PaxDb" id="4896-SPAC607.04.1"/>
<dbReference type="EnsemblFungi" id="SPAC607.04.1">
    <property type="protein sequence ID" value="SPAC607.04.1:pep"/>
    <property type="gene ID" value="SPAC607.04"/>
</dbReference>
<dbReference type="GeneID" id="2543061"/>
<dbReference type="KEGG" id="spo:2543061"/>
<dbReference type="PomBase" id="SPAC607.04">
    <property type="gene designation" value="arg82"/>
</dbReference>
<dbReference type="VEuPathDB" id="FungiDB:SPAC607.04"/>
<dbReference type="eggNOG" id="KOG1620">
    <property type="taxonomic scope" value="Eukaryota"/>
</dbReference>
<dbReference type="HOGENOM" id="CLU_042569_1_1_1"/>
<dbReference type="InParanoid" id="Q9US14"/>
<dbReference type="OMA" id="FRICGMK"/>
<dbReference type="PhylomeDB" id="Q9US14"/>
<dbReference type="Reactome" id="R-SPO-1855167">
    <property type="pathway name" value="Synthesis of pyrophosphates in the cytosol"/>
</dbReference>
<dbReference type="Reactome" id="R-SPO-1855191">
    <property type="pathway name" value="Synthesis of IPs in the nucleus"/>
</dbReference>
<dbReference type="PRO" id="PR:Q9US14"/>
<dbReference type="Proteomes" id="UP000002485">
    <property type="component" value="Chromosome I"/>
</dbReference>
<dbReference type="GO" id="GO:0005737">
    <property type="term" value="C:cytoplasm"/>
    <property type="evidence" value="ECO:0000318"/>
    <property type="project" value="GO_Central"/>
</dbReference>
<dbReference type="GO" id="GO:0005829">
    <property type="term" value="C:cytosol"/>
    <property type="evidence" value="ECO:0007005"/>
    <property type="project" value="PomBase"/>
</dbReference>
<dbReference type="GO" id="GO:0005634">
    <property type="term" value="C:nucleus"/>
    <property type="evidence" value="ECO:0007005"/>
    <property type="project" value="PomBase"/>
</dbReference>
<dbReference type="GO" id="GO:0005524">
    <property type="term" value="F:ATP binding"/>
    <property type="evidence" value="ECO:0007669"/>
    <property type="project" value="UniProtKB-KW"/>
</dbReference>
<dbReference type="GO" id="GO:0000824">
    <property type="term" value="F:inositol-1,4,5,6-tetrakisphosphate 3-kinase activity"/>
    <property type="evidence" value="ECO:0000318"/>
    <property type="project" value="GO_Central"/>
</dbReference>
<dbReference type="GO" id="GO:0008440">
    <property type="term" value="F:inositol-1,4,5-trisphosphate 3-kinase activity"/>
    <property type="evidence" value="ECO:0000318"/>
    <property type="project" value="GO_Central"/>
</dbReference>
<dbReference type="GO" id="GO:0000823">
    <property type="term" value="F:inositol-1,4,5-trisphosphate 6-kinase activity"/>
    <property type="evidence" value="ECO:0007669"/>
    <property type="project" value="RHEA"/>
</dbReference>
<dbReference type="GO" id="GO:0032958">
    <property type="term" value="P:inositol phosphate biosynthetic process"/>
    <property type="evidence" value="ECO:0000318"/>
    <property type="project" value="GO_Central"/>
</dbReference>
<dbReference type="GO" id="GO:0046854">
    <property type="term" value="P:phosphatidylinositol phosphate biosynthetic process"/>
    <property type="evidence" value="ECO:0000318"/>
    <property type="project" value="GO_Central"/>
</dbReference>
<dbReference type="Gene3D" id="3.30.470.160">
    <property type="entry name" value="Inositol polyphosphate kinase"/>
    <property type="match status" value="1"/>
</dbReference>
<dbReference type="InterPro" id="IPR005522">
    <property type="entry name" value="IPK"/>
</dbReference>
<dbReference type="InterPro" id="IPR038286">
    <property type="entry name" value="IPK_sf"/>
</dbReference>
<dbReference type="PANTHER" id="PTHR12400">
    <property type="entry name" value="INOSITOL POLYPHOSPHATE KINASE"/>
    <property type="match status" value="1"/>
</dbReference>
<dbReference type="PANTHER" id="PTHR12400:SF103">
    <property type="entry name" value="INOSITOL POLYPHOSPHATE MULTIKINASE"/>
    <property type="match status" value="1"/>
</dbReference>
<dbReference type="Pfam" id="PF03770">
    <property type="entry name" value="IPK"/>
    <property type="match status" value="1"/>
</dbReference>
<dbReference type="SUPFAM" id="SSF56104">
    <property type="entry name" value="SAICAR synthase-like"/>
    <property type="match status" value="1"/>
</dbReference>